<dbReference type="EMBL" id="CP000151">
    <property type="protein sequence ID" value="ABB07053.1"/>
    <property type="molecule type" value="Genomic_DNA"/>
</dbReference>
<dbReference type="RefSeq" id="WP_004199273.1">
    <property type="nucleotide sequence ID" value="NZ_WNDV01000034.1"/>
</dbReference>
<dbReference type="SMR" id="Q39KG3"/>
<dbReference type="GeneID" id="98107156"/>
<dbReference type="KEGG" id="bur:Bcep18194_A3451"/>
<dbReference type="HOGENOM" id="CLU_144911_0_1_4"/>
<dbReference type="Proteomes" id="UP000002705">
    <property type="component" value="Chromosome 1"/>
</dbReference>
<dbReference type="GO" id="GO:0005737">
    <property type="term" value="C:cytoplasm"/>
    <property type="evidence" value="ECO:0007669"/>
    <property type="project" value="UniProtKB-ARBA"/>
</dbReference>
<dbReference type="GO" id="GO:0015935">
    <property type="term" value="C:small ribosomal subunit"/>
    <property type="evidence" value="ECO:0007669"/>
    <property type="project" value="InterPro"/>
</dbReference>
<dbReference type="GO" id="GO:0019843">
    <property type="term" value="F:rRNA binding"/>
    <property type="evidence" value="ECO:0007669"/>
    <property type="project" value="UniProtKB-UniRule"/>
</dbReference>
<dbReference type="GO" id="GO:0003735">
    <property type="term" value="F:structural constituent of ribosome"/>
    <property type="evidence" value="ECO:0007669"/>
    <property type="project" value="InterPro"/>
</dbReference>
<dbReference type="GO" id="GO:0000028">
    <property type="term" value="P:ribosomal small subunit assembly"/>
    <property type="evidence" value="ECO:0007669"/>
    <property type="project" value="TreeGrafter"/>
</dbReference>
<dbReference type="GO" id="GO:0006412">
    <property type="term" value="P:translation"/>
    <property type="evidence" value="ECO:0007669"/>
    <property type="project" value="UniProtKB-UniRule"/>
</dbReference>
<dbReference type="FunFam" id="3.30.860.10:FF:000001">
    <property type="entry name" value="30S ribosomal protein S19"/>
    <property type="match status" value="1"/>
</dbReference>
<dbReference type="Gene3D" id="3.30.860.10">
    <property type="entry name" value="30s Ribosomal Protein S19, Chain A"/>
    <property type="match status" value="1"/>
</dbReference>
<dbReference type="HAMAP" id="MF_00531">
    <property type="entry name" value="Ribosomal_uS19"/>
    <property type="match status" value="1"/>
</dbReference>
<dbReference type="InterPro" id="IPR002222">
    <property type="entry name" value="Ribosomal_uS19"/>
</dbReference>
<dbReference type="InterPro" id="IPR005732">
    <property type="entry name" value="Ribosomal_uS19_bac-type"/>
</dbReference>
<dbReference type="InterPro" id="IPR020934">
    <property type="entry name" value="Ribosomal_uS19_CS"/>
</dbReference>
<dbReference type="InterPro" id="IPR023575">
    <property type="entry name" value="Ribosomal_uS19_SF"/>
</dbReference>
<dbReference type="NCBIfam" id="TIGR01050">
    <property type="entry name" value="rpsS_bact"/>
    <property type="match status" value="1"/>
</dbReference>
<dbReference type="PANTHER" id="PTHR11880">
    <property type="entry name" value="RIBOSOMAL PROTEIN S19P FAMILY MEMBER"/>
    <property type="match status" value="1"/>
</dbReference>
<dbReference type="PANTHER" id="PTHR11880:SF8">
    <property type="entry name" value="SMALL RIBOSOMAL SUBUNIT PROTEIN US19M"/>
    <property type="match status" value="1"/>
</dbReference>
<dbReference type="Pfam" id="PF00203">
    <property type="entry name" value="Ribosomal_S19"/>
    <property type="match status" value="1"/>
</dbReference>
<dbReference type="PIRSF" id="PIRSF002144">
    <property type="entry name" value="Ribosomal_S19"/>
    <property type="match status" value="1"/>
</dbReference>
<dbReference type="PRINTS" id="PR00975">
    <property type="entry name" value="RIBOSOMALS19"/>
</dbReference>
<dbReference type="SUPFAM" id="SSF54570">
    <property type="entry name" value="Ribosomal protein S19"/>
    <property type="match status" value="1"/>
</dbReference>
<dbReference type="PROSITE" id="PS00323">
    <property type="entry name" value="RIBOSOMAL_S19"/>
    <property type="match status" value="1"/>
</dbReference>
<protein>
    <recommendedName>
        <fullName evidence="1">Small ribosomal subunit protein uS19</fullName>
    </recommendedName>
    <alternativeName>
        <fullName evidence="2">30S ribosomal protein S19</fullName>
    </alternativeName>
</protein>
<evidence type="ECO:0000255" key="1">
    <source>
        <dbReference type="HAMAP-Rule" id="MF_00531"/>
    </source>
</evidence>
<evidence type="ECO:0000305" key="2"/>
<reference key="1">
    <citation type="submission" date="2005-10" db="EMBL/GenBank/DDBJ databases">
        <title>Complete sequence of chromosome 1 of Burkholderia sp. 383.</title>
        <authorList>
            <consortium name="US DOE Joint Genome Institute"/>
            <person name="Copeland A."/>
            <person name="Lucas S."/>
            <person name="Lapidus A."/>
            <person name="Barry K."/>
            <person name="Detter J.C."/>
            <person name="Glavina T."/>
            <person name="Hammon N."/>
            <person name="Israni S."/>
            <person name="Pitluck S."/>
            <person name="Chain P."/>
            <person name="Malfatti S."/>
            <person name="Shin M."/>
            <person name="Vergez L."/>
            <person name="Schmutz J."/>
            <person name="Larimer F."/>
            <person name="Land M."/>
            <person name="Kyrpides N."/>
            <person name="Lykidis A."/>
            <person name="Richardson P."/>
        </authorList>
    </citation>
    <scope>NUCLEOTIDE SEQUENCE [LARGE SCALE GENOMIC DNA]</scope>
    <source>
        <strain>ATCC 17760 / DSM 23089 / LMG 22485 / NCIMB 9086 / R18194 / 383</strain>
    </source>
</reference>
<keyword id="KW-0687">Ribonucleoprotein</keyword>
<keyword id="KW-0689">Ribosomal protein</keyword>
<keyword id="KW-0694">RNA-binding</keyword>
<keyword id="KW-0699">rRNA-binding</keyword>
<feature type="chain" id="PRO_0000265337" description="Small ribosomal subunit protein uS19">
    <location>
        <begin position="1"/>
        <end position="91"/>
    </location>
</feature>
<proteinExistence type="inferred from homology"/>
<organism>
    <name type="scientific">Burkholderia lata (strain ATCC 17760 / DSM 23089 / LMG 22485 / NCIMB 9086 / R18194 / 383)</name>
    <dbReference type="NCBI Taxonomy" id="482957"/>
    <lineage>
        <taxon>Bacteria</taxon>
        <taxon>Pseudomonadati</taxon>
        <taxon>Pseudomonadota</taxon>
        <taxon>Betaproteobacteria</taxon>
        <taxon>Burkholderiales</taxon>
        <taxon>Burkholderiaceae</taxon>
        <taxon>Burkholderia</taxon>
        <taxon>Burkholderia cepacia complex</taxon>
    </lineage>
</organism>
<sequence length="91" mass="10108">MARSVKKGPFCDAHLLKKVEAAAASRDKKPIKTWSRRSTILPDFIGLTIAVHNGRQHVPVYISENMVGHKLGEFALTRTFKGHAADKKAKK</sequence>
<name>RS19_BURL3</name>
<gene>
    <name evidence="1" type="primary">rpsS</name>
    <name type="ordered locus">Bcep18194_A3451</name>
</gene>
<comment type="function">
    <text evidence="1">Protein S19 forms a complex with S13 that binds strongly to the 16S ribosomal RNA.</text>
</comment>
<comment type="similarity">
    <text evidence="1">Belongs to the universal ribosomal protein uS19 family.</text>
</comment>
<accession>Q39KG3</accession>